<comment type="function">
    <text evidence="1">Required for the sorting and concentration of proteins resulting in the entry of these proteins into the invaginating vesicles of the multivesicular body (MVB). Also required for the proteolytic cleavage of the transcription factor RIM101 in response to alkaline ambient pH (By similarity).</text>
</comment>
<comment type="subunit">
    <text evidence="1">A component of the endosomal sorting required for transport complex III (ESCRT-III).</text>
</comment>
<comment type="subcellular location">
    <subcellularLocation>
        <location evidence="1">Cytoplasm</location>
    </subcellularLocation>
    <subcellularLocation>
        <location evidence="1">Endosome membrane</location>
        <topology evidence="1">Peripheral membrane protein</topology>
    </subcellularLocation>
</comment>
<comment type="similarity">
    <text evidence="4">Belongs to the SNF7 family.</text>
</comment>
<gene>
    <name type="primary">SNF7</name>
    <name type="synonym">VPS32</name>
    <name type="ordered locus">DEHA2D08844g</name>
</gene>
<feature type="chain" id="PRO_0000211440" description="Vacuolar-sorting protein SNF7">
    <location>
        <begin position="1"/>
        <end position="226"/>
    </location>
</feature>
<feature type="region of interest" description="Disordered" evidence="3">
    <location>
        <begin position="164"/>
        <end position="226"/>
    </location>
</feature>
<feature type="coiled-coil region" evidence="2">
    <location>
        <begin position="18"/>
        <end position="177"/>
    </location>
</feature>
<keyword id="KW-0175">Coiled coil</keyword>
<keyword id="KW-0963">Cytoplasm</keyword>
<keyword id="KW-0967">Endosome</keyword>
<keyword id="KW-0472">Membrane</keyword>
<keyword id="KW-1185">Reference proteome</keyword>
<organism>
    <name type="scientific">Debaryomyces hansenii (strain ATCC 36239 / CBS 767 / BCRC 21394 / JCM 1990 / NBRC 0083 / IGC 2968)</name>
    <name type="common">Yeast</name>
    <name type="synonym">Torulaspora hansenii</name>
    <dbReference type="NCBI Taxonomy" id="284592"/>
    <lineage>
        <taxon>Eukaryota</taxon>
        <taxon>Fungi</taxon>
        <taxon>Dikarya</taxon>
        <taxon>Ascomycota</taxon>
        <taxon>Saccharomycotina</taxon>
        <taxon>Pichiomycetes</taxon>
        <taxon>Debaryomycetaceae</taxon>
        <taxon>Debaryomyces</taxon>
    </lineage>
</organism>
<name>SNF7_DEBHA</name>
<protein>
    <recommendedName>
        <fullName>Vacuolar-sorting protein SNF7</fullName>
    </recommendedName>
    <alternativeName>
        <fullName>Vacuolar protein-sorting-associated protein 32</fullName>
    </alternativeName>
</protein>
<evidence type="ECO:0000250" key="1"/>
<evidence type="ECO:0000255" key="2"/>
<evidence type="ECO:0000256" key="3">
    <source>
        <dbReference type="SAM" id="MobiDB-lite"/>
    </source>
</evidence>
<evidence type="ECO:0000305" key="4"/>
<sequence>MWNYLFGGNKQQKKEYPKKAIVELREHIQMLNKKRSHLESQIADQDALARKYITTNKALAKNALKRKKGYEANLMKIENQIDSLETQLTSIEGANLNLETMKAMKQGAQAMKQIHGEYDVDKVENTMDDIREQVELADEISEAISRPVGTEFVDEDELDEELAMLQEEEKEHKQQTPAQKAPVAKVSAPEEEMPDFPTVNKNKPAASTEDDEDEEALKALQAEMGL</sequence>
<accession>Q6BSH2</accession>
<proteinExistence type="inferred from homology"/>
<dbReference type="EMBL" id="CR382136">
    <property type="protein sequence ID" value="CAG86999.2"/>
    <property type="molecule type" value="Genomic_DNA"/>
</dbReference>
<dbReference type="RefSeq" id="XP_458848.2">
    <property type="nucleotide sequence ID" value="XM_458848.1"/>
</dbReference>
<dbReference type="SMR" id="Q6BSH2"/>
<dbReference type="FunCoup" id="Q6BSH2">
    <property type="interactions" value="710"/>
</dbReference>
<dbReference type="STRING" id="284592.Q6BSH2"/>
<dbReference type="GeneID" id="2901254"/>
<dbReference type="KEGG" id="dha:DEHA2D08844g"/>
<dbReference type="VEuPathDB" id="FungiDB:DEHA2D08844g"/>
<dbReference type="eggNOG" id="KOG1656">
    <property type="taxonomic scope" value="Eukaryota"/>
</dbReference>
<dbReference type="HOGENOM" id="CLU_071097_1_0_1"/>
<dbReference type="InParanoid" id="Q6BSH2"/>
<dbReference type="OMA" id="MKQIHGG"/>
<dbReference type="OrthoDB" id="5592979at2759"/>
<dbReference type="Proteomes" id="UP000000599">
    <property type="component" value="Chromosome D"/>
</dbReference>
<dbReference type="GO" id="GO:0009898">
    <property type="term" value="C:cytoplasmic side of plasma membrane"/>
    <property type="evidence" value="ECO:0007669"/>
    <property type="project" value="TreeGrafter"/>
</dbReference>
<dbReference type="GO" id="GO:0000815">
    <property type="term" value="C:ESCRT III complex"/>
    <property type="evidence" value="ECO:0007669"/>
    <property type="project" value="TreeGrafter"/>
</dbReference>
<dbReference type="GO" id="GO:0005771">
    <property type="term" value="C:multivesicular body"/>
    <property type="evidence" value="ECO:0007669"/>
    <property type="project" value="TreeGrafter"/>
</dbReference>
<dbReference type="GO" id="GO:0043328">
    <property type="term" value="P:protein transport to vacuole involved in ubiquitin-dependent protein catabolic process via the multivesicular body sorting pathway"/>
    <property type="evidence" value="ECO:0007669"/>
    <property type="project" value="EnsemblFungi"/>
</dbReference>
<dbReference type="GO" id="GO:0006900">
    <property type="term" value="P:vesicle budding from membrane"/>
    <property type="evidence" value="ECO:0007669"/>
    <property type="project" value="TreeGrafter"/>
</dbReference>
<dbReference type="Gene3D" id="6.10.250.1710">
    <property type="match status" value="1"/>
</dbReference>
<dbReference type="Gene3D" id="1.10.287.1060">
    <property type="entry name" value="ESAT-6-like"/>
    <property type="match status" value="1"/>
</dbReference>
<dbReference type="InterPro" id="IPR005024">
    <property type="entry name" value="Snf7_fam"/>
</dbReference>
<dbReference type="PANTHER" id="PTHR22761">
    <property type="entry name" value="CHARGED MULTIVESICULAR BODY PROTEIN"/>
    <property type="match status" value="1"/>
</dbReference>
<dbReference type="PANTHER" id="PTHR22761:SF10">
    <property type="entry name" value="GH13992P"/>
    <property type="match status" value="1"/>
</dbReference>
<dbReference type="Pfam" id="PF03357">
    <property type="entry name" value="Snf7"/>
    <property type="match status" value="1"/>
</dbReference>
<reference key="1">
    <citation type="journal article" date="2004" name="Nature">
        <title>Genome evolution in yeasts.</title>
        <authorList>
            <person name="Dujon B."/>
            <person name="Sherman D."/>
            <person name="Fischer G."/>
            <person name="Durrens P."/>
            <person name="Casaregola S."/>
            <person name="Lafontaine I."/>
            <person name="de Montigny J."/>
            <person name="Marck C."/>
            <person name="Neuveglise C."/>
            <person name="Talla E."/>
            <person name="Goffard N."/>
            <person name="Frangeul L."/>
            <person name="Aigle M."/>
            <person name="Anthouard V."/>
            <person name="Babour A."/>
            <person name="Barbe V."/>
            <person name="Barnay S."/>
            <person name="Blanchin S."/>
            <person name="Beckerich J.-M."/>
            <person name="Beyne E."/>
            <person name="Bleykasten C."/>
            <person name="Boisrame A."/>
            <person name="Boyer J."/>
            <person name="Cattolico L."/>
            <person name="Confanioleri F."/>
            <person name="de Daruvar A."/>
            <person name="Despons L."/>
            <person name="Fabre E."/>
            <person name="Fairhead C."/>
            <person name="Ferry-Dumazet H."/>
            <person name="Groppi A."/>
            <person name="Hantraye F."/>
            <person name="Hennequin C."/>
            <person name="Jauniaux N."/>
            <person name="Joyet P."/>
            <person name="Kachouri R."/>
            <person name="Kerrest A."/>
            <person name="Koszul R."/>
            <person name="Lemaire M."/>
            <person name="Lesur I."/>
            <person name="Ma L."/>
            <person name="Muller H."/>
            <person name="Nicaud J.-M."/>
            <person name="Nikolski M."/>
            <person name="Oztas S."/>
            <person name="Ozier-Kalogeropoulos O."/>
            <person name="Pellenz S."/>
            <person name="Potier S."/>
            <person name="Richard G.-F."/>
            <person name="Straub M.-L."/>
            <person name="Suleau A."/>
            <person name="Swennen D."/>
            <person name="Tekaia F."/>
            <person name="Wesolowski-Louvel M."/>
            <person name="Westhof E."/>
            <person name="Wirth B."/>
            <person name="Zeniou-Meyer M."/>
            <person name="Zivanovic Y."/>
            <person name="Bolotin-Fukuhara M."/>
            <person name="Thierry A."/>
            <person name="Bouchier C."/>
            <person name="Caudron B."/>
            <person name="Scarpelli C."/>
            <person name="Gaillardin C."/>
            <person name="Weissenbach J."/>
            <person name="Wincker P."/>
            <person name="Souciet J.-L."/>
        </authorList>
    </citation>
    <scope>NUCLEOTIDE SEQUENCE [LARGE SCALE GENOMIC DNA]</scope>
    <source>
        <strain>ATCC 36239 / CBS 767 / BCRC 21394 / JCM 1990 / NBRC 0083 / IGC 2968</strain>
    </source>
</reference>